<evidence type="ECO:0000269" key="1">
    <source>
    </source>
</evidence>
<evidence type="ECO:0000269" key="2">
    <source>
    </source>
</evidence>
<evidence type="ECO:0000269" key="3">
    <source>
    </source>
</evidence>
<evidence type="ECO:0000269" key="4">
    <source>
    </source>
</evidence>
<evidence type="ECO:0000303" key="5">
    <source>
    </source>
</evidence>
<evidence type="ECO:0000303" key="6">
    <source>
    </source>
</evidence>
<evidence type="ECO:0000305" key="7"/>
<evidence type="ECO:0000305" key="8">
    <source>
    </source>
</evidence>
<evidence type="ECO:0000305" key="9">
    <source>
    </source>
</evidence>
<evidence type="ECO:0000312" key="10">
    <source>
        <dbReference type="EMBL" id="BAJ76720.1"/>
    </source>
</evidence>
<reference key="1">
    <citation type="journal article" date="2011" name="Appl. Environ. Microbiol.">
        <title>Identification of the monooxygenase gene clusters responsible for the regioselective oxidation of phenol to hydroquinone in mycobacteria.</title>
        <authorList>
            <person name="Furuya T."/>
            <person name="Hirose S."/>
            <person name="Osanai H."/>
            <person name="Semba H."/>
            <person name="Kino K."/>
        </authorList>
    </citation>
    <scope>NUCLEOTIDE SEQUENCE [GENOMIC DNA]</scope>
    <scope>FUNCTION AS A PROPANE 2-MONOOXYGENASE</scope>
    <scope>CATALYTIC ACTIVITY</scope>
    <scope>SUBSTRATE SPECIFICITY</scope>
    <scope>INDUCTION BY ACETONE</scope>
    <scope>SUBUNIT</scope>
    <source>
        <strain evidence="10">12523</strain>
    </source>
</reference>
<reference key="2">
    <citation type="journal article" date="2011" name="J. Bacteriol.">
        <title>Identification of the regulator gene responsible for the acetone-responsive expression of the binuclear iron monooxygenase gene cluster in mycobacteria.</title>
        <authorList>
            <person name="Furuya T."/>
            <person name="Hirose S."/>
            <person name="Semba H."/>
            <person name="Kino K."/>
        </authorList>
    </citation>
    <scope>INDUCTION BY MIMR</scope>
    <source>
        <strain>12523</strain>
    </source>
</reference>
<reference key="3">
    <citation type="journal article" date="2013" name="FEBS J.">
        <title>The mycobacterial binuclear iron monooxygenases require a specific chaperonin-like protein for functional expression in a heterologous host.</title>
        <authorList>
            <person name="Furuya T."/>
            <person name="Hayashi M."/>
            <person name="Semba H."/>
            <person name="Kino K."/>
        </authorList>
    </citation>
    <scope>FUNCTION AS A PHENOL 4-MONOOXYGENASE</scope>
    <scope>CATALYTIC ACTIVITY</scope>
    <scope>SUBUNIT</scope>
    <source>
        <strain>12523</strain>
    </source>
</reference>
<reference key="4">
    <citation type="journal article" date="2015" name="FEMS Microbiol. Lett.">
        <title>Catalytic function of the mycobacterial binuclear iron monooxygenase in acetone metabolism.</title>
        <authorList>
            <person name="Furuya T."/>
            <person name="Nakao T."/>
            <person name="Kino K."/>
        </authorList>
    </citation>
    <scope>FUNCTION AS AN ACETONE 1-MONOOXYGENASE</scope>
    <scope>CATALYTIC ACTIVITY</scope>
    <scope>SUBSTRATE SPECIFICITY</scope>
    <source>
        <strain>12523</strain>
    </source>
</reference>
<keyword id="KW-0503">Monooxygenase</keyword>
<keyword id="KW-0520">NAD</keyword>
<keyword id="KW-0560">Oxidoreductase</keyword>
<accession>E9RFT1</accession>
<organism>
    <name type="scientific">Mycolicibacterium goodii</name>
    <name type="common">Mycobacterium goodii</name>
    <dbReference type="NCBI Taxonomy" id="134601"/>
    <lineage>
        <taxon>Bacteria</taxon>
        <taxon>Bacillati</taxon>
        <taxon>Actinomycetota</taxon>
        <taxon>Actinomycetes</taxon>
        <taxon>Mycobacteriales</taxon>
        <taxon>Mycobacteriaceae</taxon>
        <taxon>Mycolicibacterium</taxon>
    </lineage>
</organism>
<gene>
    <name evidence="5" type="primary">mimC</name>
</gene>
<proteinExistence type="evidence at protein level"/>
<feature type="chain" id="PRO_0000442972" description="Propane 2-monooxygenase, hydroxylase component small subunit">
    <location>
        <begin position="1"/>
        <end position="368"/>
    </location>
</feature>
<sequence>MSAPEKPRERSFPKIEFTDSEAGAKVFPSSKSRSFSYFTPAKLRATMYEDVTVDVQPDPDRHLTQGWIYGFGNGPGGYPKDWTTAKSSNWHAFLDPNEEWNQTIYRNNAAVVRQVELCLKNAKRARVYDGWHTIWLTFIERHVGAWMHAENGLALHVFTSIQRSGPTNMINTAVAVNAAHKMRFAQDLALFNLDLAEATDAFDGSVHRAVWQEAPEWQPTRRVVEELTAVGDWCQLLFATNIVFEQLVGSLFRSELIMQIAARNGDYITPTIVGTGEHDYDRDLNYSRNLFRLLTRDPEHGEANKALFAEWLGIWVPRCLDAARALQPIWSTPADKAVTFASSLKAAKAKFSALLEEIDLDIPEELDK</sequence>
<name>MIMC_MYCGD</name>
<protein>
    <recommendedName>
        <fullName evidence="5">Propane 2-monooxygenase, hydroxylase component small subunit</fullName>
        <ecNumber evidence="8">1.14.13.227</ecNumber>
    </recommendedName>
    <alternativeName>
        <fullName evidence="6">Acetone 1-monooxygenase</fullName>
    </alternativeName>
    <alternativeName>
        <fullName evidence="6">Methylethylketone 1-monooxygenase</fullName>
    </alternativeName>
    <alternativeName>
        <fullName evidence="5">Phenol 4-monooxygenase</fullName>
    </alternativeName>
</protein>
<dbReference type="EC" id="1.14.13.227" evidence="8"/>
<dbReference type="EMBL" id="AB568291">
    <property type="protein sequence ID" value="BAJ76720.1"/>
    <property type="molecule type" value="Genomic_DNA"/>
</dbReference>
<dbReference type="RefSeq" id="WP_214387468.1">
    <property type="nucleotide sequence ID" value="NZ_JAHBOK010000013.1"/>
</dbReference>
<dbReference type="SMR" id="E9RFT1"/>
<dbReference type="STRING" id="134601.AFA91_29110"/>
<dbReference type="BioCyc" id="MetaCyc:MONOMER-19804"/>
<dbReference type="BRENDA" id="1.14.13.222">
    <property type="organism ID" value="13503"/>
</dbReference>
<dbReference type="GO" id="GO:0016709">
    <property type="term" value="F:oxidoreductase activity, acting on paired donors, with incorporation or reduction of molecular oxygen, NAD(P)H as one donor, and incorporation of one atom of oxygen"/>
    <property type="evidence" value="ECO:0007669"/>
    <property type="project" value="InterPro"/>
</dbReference>
<dbReference type="CDD" id="cd01058">
    <property type="entry name" value="AAMH_B"/>
    <property type="match status" value="1"/>
</dbReference>
<dbReference type="Gene3D" id="1.10.620.20">
    <property type="entry name" value="Ribonucleotide Reductase, subunit A"/>
    <property type="match status" value="1"/>
</dbReference>
<dbReference type="InterPro" id="IPR009078">
    <property type="entry name" value="Ferritin-like_SF"/>
</dbReference>
<dbReference type="InterPro" id="IPR012078">
    <property type="entry name" value="MP_mOase_hydro"/>
</dbReference>
<dbReference type="InterPro" id="IPR003430">
    <property type="entry name" value="Phenol_Hydrox"/>
</dbReference>
<dbReference type="InterPro" id="IPR012348">
    <property type="entry name" value="RNR-like"/>
</dbReference>
<dbReference type="Pfam" id="PF02332">
    <property type="entry name" value="Phenol_Hydrox"/>
    <property type="match status" value="1"/>
</dbReference>
<dbReference type="PIRSF" id="PIRSF000040">
    <property type="entry name" value="MMOH_comp"/>
    <property type="match status" value="1"/>
</dbReference>
<dbReference type="SUPFAM" id="SSF47240">
    <property type="entry name" value="Ferritin-like"/>
    <property type="match status" value="1"/>
</dbReference>
<comment type="function">
    <text evidence="1 3 4">Component of the propane 2-monooxygenase multicomponent enzyme system which is involved in the degradation of propane via the O2-dependent hydroxylation of propane (PubMed:21183637). Also involved in the degradation of acetone via the O2-dependent hydroxylation of acetone (PubMed:26293913). Also able to catalyze the oxidation of phenol, methylethylketone (2-butanone), 1-propanol and 2-propanol (PubMed:21183637, PubMed:23171424, PubMed:26293913).</text>
</comment>
<comment type="catalytic activity">
    <reaction evidence="8">
        <text>propane + NADH + O2 + H(+) = propan-2-ol + NAD(+) + H2O</text>
        <dbReference type="Rhea" id="RHEA:49992"/>
        <dbReference type="ChEBI" id="CHEBI:15377"/>
        <dbReference type="ChEBI" id="CHEBI:15378"/>
        <dbReference type="ChEBI" id="CHEBI:15379"/>
        <dbReference type="ChEBI" id="CHEBI:17824"/>
        <dbReference type="ChEBI" id="CHEBI:32879"/>
        <dbReference type="ChEBI" id="CHEBI:57540"/>
        <dbReference type="ChEBI" id="CHEBI:57945"/>
        <dbReference type="EC" id="1.14.13.227"/>
    </reaction>
</comment>
<comment type="catalytic activity">
    <reaction evidence="4">
        <text>acetone + NADH + O2 + H(+) = hydroxyacetone + NAD(+) + H2O</text>
        <dbReference type="Rhea" id="RHEA:55788"/>
        <dbReference type="ChEBI" id="CHEBI:15347"/>
        <dbReference type="ChEBI" id="CHEBI:15377"/>
        <dbReference type="ChEBI" id="CHEBI:15378"/>
        <dbReference type="ChEBI" id="CHEBI:15379"/>
        <dbReference type="ChEBI" id="CHEBI:27957"/>
        <dbReference type="ChEBI" id="CHEBI:57540"/>
        <dbReference type="ChEBI" id="CHEBI:57945"/>
    </reaction>
</comment>
<comment type="catalytic activity">
    <reaction evidence="4">
        <text>butan-2-one + NADH + O2 + H(+) = 1-hydroxy-2-butanone + NAD(+) + H2O</text>
        <dbReference type="Rhea" id="RHEA:55792"/>
        <dbReference type="ChEBI" id="CHEBI:15377"/>
        <dbReference type="ChEBI" id="CHEBI:15378"/>
        <dbReference type="ChEBI" id="CHEBI:15379"/>
        <dbReference type="ChEBI" id="CHEBI:28398"/>
        <dbReference type="ChEBI" id="CHEBI:57540"/>
        <dbReference type="ChEBI" id="CHEBI:57945"/>
        <dbReference type="ChEBI" id="CHEBI:88390"/>
    </reaction>
</comment>
<comment type="catalytic activity">
    <reaction evidence="3 8">
        <text>phenol + NADH + O2 + H(+) = hydroquinone + NAD(+) + H2O</text>
        <dbReference type="Rhea" id="RHEA:55796"/>
        <dbReference type="ChEBI" id="CHEBI:15377"/>
        <dbReference type="ChEBI" id="CHEBI:15378"/>
        <dbReference type="ChEBI" id="CHEBI:15379"/>
        <dbReference type="ChEBI" id="CHEBI:15882"/>
        <dbReference type="ChEBI" id="CHEBI:17594"/>
        <dbReference type="ChEBI" id="CHEBI:57540"/>
        <dbReference type="ChEBI" id="CHEBI:57945"/>
    </reaction>
</comment>
<comment type="subunit">
    <text evidence="8 9">The propane 2-monooxygenase multicomponent enzyme system is composed of an electron transfer component and a monooxygenase component interacting with the effector protein MimD. The electron transfer component is composed of a reductase (MimB), and the monooxygenase component is formed by a large subunit (MimA) and a small subunit (MimC) (PubMed:21183637). Requires the presence of the chaperonin-like protein MimG to ensure a productive folding, resulting of a soluble MimC, which leads to the active form of MimABCD (PubMed:23171424).</text>
</comment>
<comment type="induction">
    <text evidence="1 2">By acetone (PubMed:21183637). Transcriptionally activated by MimR (PubMed:21856847).</text>
</comment>
<comment type="similarity">
    <text evidence="7">Belongs to the TmoE/XamoE family.</text>
</comment>